<proteinExistence type="inferred from homology"/>
<comment type="function">
    <text evidence="1">Catalyzes the NADPH-dependent rearrangement and reduction of 1-deoxy-D-xylulose-5-phosphate (DXP) to 2-C-methyl-D-erythritol 4-phosphate (MEP).</text>
</comment>
<comment type="catalytic activity">
    <reaction evidence="1">
        <text>2-C-methyl-D-erythritol 4-phosphate + NADP(+) = 1-deoxy-D-xylulose 5-phosphate + NADPH + H(+)</text>
        <dbReference type="Rhea" id="RHEA:13717"/>
        <dbReference type="ChEBI" id="CHEBI:15378"/>
        <dbReference type="ChEBI" id="CHEBI:57783"/>
        <dbReference type="ChEBI" id="CHEBI:57792"/>
        <dbReference type="ChEBI" id="CHEBI:58262"/>
        <dbReference type="ChEBI" id="CHEBI:58349"/>
        <dbReference type="EC" id="1.1.1.267"/>
    </reaction>
    <physiologicalReaction direction="right-to-left" evidence="1">
        <dbReference type="Rhea" id="RHEA:13719"/>
    </physiologicalReaction>
</comment>
<comment type="cofactor">
    <cofactor evidence="1">
        <name>Mg(2+)</name>
        <dbReference type="ChEBI" id="CHEBI:18420"/>
    </cofactor>
    <cofactor evidence="1">
        <name>Mn(2+)</name>
        <dbReference type="ChEBI" id="CHEBI:29035"/>
    </cofactor>
</comment>
<comment type="pathway">
    <text evidence="1">Isoprenoid biosynthesis; isopentenyl diphosphate biosynthesis via DXP pathway; isopentenyl diphosphate from 1-deoxy-D-xylulose 5-phosphate: step 1/6.</text>
</comment>
<comment type="similarity">
    <text evidence="1">Belongs to the DXR family.</text>
</comment>
<feature type="chain" id="PRO_0000163596" description="1-deoxy-D-xylulose 5-phosphate reductoisomerase">
    <location>
        <begin position="1"/>
        <end position="399"/>
    </location>
</feature>
<feature type="binding site" evidence="1">
    <location>
        <position position="11"/>
    </location>
    <ligand>
        <name>NADPH</name>
        <dbReference type="ChEBI" id="CHEBI:57783"/>
    </ligand>
</feature>
<feature type="binding site" evidence="1">
    <location>
        <position position="12"/>
    </location>
    <ligand>
        <name>NADPH</name>
        <dbReference type="ChEBI" id="CHEBI:57783"/>
    </ligand>
</feature>
<feature type="binding site" evidence="1">
    <location>
        <position position="13"/>
    </location>
    <ligand>
        <name>NADPH</name>
        <dbReference type="ChEBI" id="CHEBI:57783"/>
    </ligand>
</feature>
<feature type="binding site" evidence="1">
    <location>
        <position position="14"/>
    </location>
    <ligand>
        <name>NADPH</name>
        <dbReference type="ChEBI" id="CHEBI:57783"/>
    </ligand>
</feature>
<feature type="binding site" evidence="1">
    <location>
        <position position="37"/>
    </location>
    <ligand>
        <name>NADPH</name>
        <dbReference type="ChEBI" id="CHEBI:57783"/>
    </ligand>
</feature>
<feature type="binding site" evidence="1">
    <location>
        <position position="39"/>
    </location>
    <ligand>
        <name>NADPH</name>
        <dbReference type="ChEBI" id="CHEBI:57783"/>
    </ligand>
</feature>
<feature type="binding site" evidence="1">
    <location>
        <position position="125"/>
    </location>
    <ligand>
        <name>NADPH</name>
        <dbReference type="ChEBI" id="CHEBI:57783"/>
    </ligand>
</feature>
<feature type="binding site" evidence="1">
    <location>
        <position position="126"/>
    </location>
    <ligand>
        <name>1-deoxy-D-xylulose 5-phosphate</name>
        <dbReference type="ChEBI" id="CHEBI:57792"/>
    </ligand>
</feature>
<feature type="binding site" evidence="1">
    <location>
        <position position="127"/>
    </location>
    <ligand>
        <name>NADPH</name>
        <dbReference type="ChEBI" id="CHEBI:57783"/>
    </ligand>
</feature>
<feature type="binding site" evidence="1">
    <location>
        <position position="151"/>
    </location>
    <ligand>
        <name>Mn(2+)</name>
        <dbReference type="ChEBI" id="CHEBI:29035"/>
    </ligand>
</feature>
<feature type="binding site" evidence="1">
    <location>
        <position position="152"/>
    </location>
    <ligand>
        <name>1-deoxy-D-xylulose 5-phosphate</name>
        <dbReference type="ChEBI" id="CHEBI:57792"/>
    </ligand>
</feature>
<feature type="binding site" evidence="1">
    <location>
        <position position="153"/>
    </location>
    <ligand>
        <name>1-deoxy-D-xylulose 5-phosphate</name>
        <dbReference type="ChEBI" id="CHEBI:57792"/>
    </ligand>
</feature>
<feature type="binding site" evidence="1">
    <location>
        <position position="153"/>
    </location>
    <ligand>
        <name>Mn(2+)</name>
        <dbReference type="ChEBI" id="CHEBI:29035"/>
    </ligand>
</feature>
<feature type="binding site" evidence="1">
    <location>
        <position position="177"/>
    </location>
    <ligand>
        <name>1-deoxy-D-xylulose 5-phosphate</name>
        <dbReference type="ChEBI" id="CHEBI:57792"/>
    </ligand>
</feature>
<feature type="binding site" evidence="1">
    <location>
        <position position="200"/>
    </location>
    <ligand>
        <name>1-deoxy-D-xylulose 5-phosphate</name>
        <dbReference type="ChEBI" id="CHEBI:57792"/>
    </ligand>
</feature>
<feature type="binding site" evidence="1">
    <location>
        <position position="206"/>
    </location>
    <ligand>
        <name>NADPH</name>
        <dbReference type="ChEBI" id="CHEBI:57783"/>
    </ligand>
</feature>
<feature type="binding site" evidence="1">
    <location>
        <position position="213"/>
    </location>
    <ligand>
        <name>1-deoxy-D-xylulose 5-phosphate</name>
        <dbReference type="ChEBI" id="CHEBI:57792"/>
    </ligand>
</feature>
<feature type="binding site" evidence="1">
    <location>
        <position position="218"/>
    </location>
    <ligand>
        <name>1-deoxy-D-xylulose 5-phosphate</name>
        <dbReference type="ChEBI" id="CHEBI:57792"/>
    </ligand>
</feature>
<feature type="binding site" evidence="1">
    <location>
        <position position="219"/>
    </location>
    <ligand>
        <name>1-deoxy-D-xylulose 5-phosphate</name>
        <dbReference type="ChEBI" id="CHEBI:57792"/>
    </ligand>
</feature>
<feature type="binding site" evidence="1">
    <location>
        <position position="222"/>
    </location>
    <ligand>
        <name>1-deoxy-D-xylulose 5-phosphate</name>
        <dbReference type="ChEBI" id="CHEBI:57792"/>
    </ligand>
</feature>
<feature type="binding site" evidence="1">
    <location>
        <position position="222"/>
    </location>
    <ligand>
        <name>Mn(2+)</name>
        <dbReference type="ChEBI" id="CHEBI:29035"/>
    </ligand>
</feature>
<reference key="1">
    <citation type="journal article" date="2001" name="DNA Res.">
        <title>Complete genomic sequence of the filamentous nitrogen-fixing cyanobacterium Anabaena sp. strain PCC 7120.</title>
        <authorList>
            <person name="Kaneko T."/>
            <person name="Nakamura Y."/>
            <person name="Wolk C.P."/>
            <person name="Kuritz T."/>
            <person name="Sasamoto S."/>
            <person name="Watanabe A."/>
            <person name="Iriguchi M."/>
            <person name="Ishikawa A."/>
            <person name="Kawashima K."/>
            <person name="Kimura T."/>
            <person name="Kishida Y."/>
            <person name="Kohara M."/>
            <person name="Matsumoto M."/>
            <person name="Matsuno A."/>
            <person name="Muraki A."/>
            <person name="Nakazaki N."/>
            <person name="Shimpo S."/>
            <person name="Sugimoto M."/>
            <person name="Takazawa M."/>
            <person name="Yamada M."/>
            <person name="Yasuda M."/>
            <person name="Tabata S."/>
        </authorList>
    </citation>
    <scope>NUCLEOTIDE SEQUENCE [LARGE SCALE GENOMIC DNA]</scope>
    <source>
        <strain>PCC 7120 / SAG 25.82 / UTEX 2576</strain>
    </source>
</reference>
<dbReference type="EC" id="1.1.1.267" evidence="1"/>
<dbReference type="EMBL" id="BA000019">
    <property type="protein sequence ID" value="BAB76050.1"/>
    <property type="molecule type" value="Genomic_DNA"/>
</dbReference>
<dbReference type="PIR" id="AH2349">
    <property type="entry name" value="AH2349"/>
</dbReference>
<dbReference type="SMR" id="Q8YP49"/>
<dbReference type="STRING" id="103690.gene:10496400"/>
<dbReference type="KEGG" id="ana:alr4351"/>
<dbReference type="eggNOG" id="COG0743">
    <property type="taxonomic scope" value="Bacteria"/>
</dbReference>
<dbReference type="UniPathway" id="UPA00056">
    <property type="reaction ID" value="UER00092"/>
</dbReference>
<dbReference type="Proteomes" id="UP000002483">
    <property type="component" value="Chromosome"/>
</dbReference>
<dbReference type="GO" id="GO:0030604">
    <property type="term" value="F:1-deoxy-D-xylulose-5-phosphate reductoisomerase activity"/>
    <property type="evidence" value="ECO:0007669"/>
    <property type="project" value="UniProtKB-UniRule"/>
</dbReference>
<dbReference type="GO" id="GO:0030145">
    <property type="term" value="F:manganese ion binding"/>
    <property type="evidence" value="ECO:0007669"/>
    <property type="project" value="TreeGrafter"/>
</dbReference>
<dbReference type="GO" id="GO:0070402">
    <property type="term" value="F:NADPH binding"/>
    <property type="evidence" value="ECO:0007669"/>
    <property type="project" value="InterPro"/>
</dbReference>
<dbReference type="GO" id="GO:0051484">
    <property type="term" value="P:isopentenyl diphosphate biosynthetic process, methylerythritol 4-phosphate pathway involved in terpenoid biosynthetic process"/>
    <property type="evidence" value="ECO:0007669"/>
    <property type="project" value="TreeGrafter"/>
</dbReference>
<dbReference type="FunFam" id="3.40.50.720:FF:000183">
    <property type="entry name" value="1-deoxy-D-xylulose 5-phosphate reductoisomerase, chloroplastic"/>
    <property type="match status" value="1"/>
</dbReference>
<dbReference type="Gene3D" id="1.10.1740.10">
    <property type="match status" value="1"/>
</dbReference>
<dbReference type="Gene3D" id="3.40.50.720">
    <property type="entry name" value="NAD(P)-binding Rossmann-like Domain"/>
    <property type="match status" value="1"/>
</dbReference>
<dbReference type="HAMAP" id="MF_00183">
    <property type="entry name" value="DXP_reductoisom"/>
    <property type="match status" value="1"/>
</dbReference>
<dbReference type="InterPro" id="IPR003821">
    <property type="entry name" value="DXP_reductoisomerase"/>
</dbReference>
<dbReference type="InterPro" id="IPR013644">
    <property type="entry name" value="DXP_reductoisomerase_C"/>
</dbReference>
<dbReference type="InterPro" id="IPR013512">
    <property type="entry name" value="DXP_reductoisomerase_N"/>
</dbReference>
<dbReference type="InterPro" id="IPR026877">
    <property type="entry name" value="DXPR_C"/>
</dbReference>
<dbReference type="InterPro" id="IPR036169">
    <property type="entry name" value="DXPR_C_sf"/>
</dbReference>
<dbReference type="InterPro" id="IPR036291">
    <property type="entry name" value="NAD(P)-bd_dom_sf"/>
</dbReference>
<dbReference type="NCBIfam" id="TIGR00243">
    <property type="entry name" value="Dxr"/>
    <property type="match status" value="1"/>
</dbReference>
<dbReference type="NCBIfam" id="NF009114">
    <property type="entry name" value="PRK12464.1"/>
    <property type="match status" value="1"/>
</dbReference>
<dbReference type="PANTHER" id="PTHR30525">
    <property type="entry name" value="1-DEOXY-D-XYLULOSE 5-PHOSPHATE REDUCTOISOMERASE"/>
    <property type="match status" value="1"/>
</dbReference>
<dbReference type="PANTHER" id="PTHR30525:SF0">
    <property type="entry name" value="1-DEOXY-D-XYLULOSE 5-PHOSPHATE REDUCTOISOMERASE, CHLOROPLASTIC"/>
    <property type="match status" value="1"/>
</dbReference>
<dbReference type="Pfam" id="PF08436">
    <property type="entry name" value="DXP_redisom_C"/>
    <property type="match status" value="1"/>
</dbReference>
<dbReference type="Pfam" id="PF02670">
    <property type="entry name" value="DXP_reductoisom"/>
    <property type="match status" value="1"/>
</dbReference>
<dbReference type="Pfam" id="PF13288">
    <property type="entry name" value="DXPR_C"/>
    <property type="match status" value="1"/>
</dbReference>
<dbReference type="PIRSF" id="PIRSF006205">
    <property type="entry name" value="Dxp_reductismrs"/>
    <property type="match status" value="1"/>
</dbReference>
<dbReference type="SUPFAM" id="SSF69055">
    <property type="entry name" value="1-deoxy-D-xylulose-5-phosphate reductoisomerase, C-terminal domain"/>
    <property type="match status" value="1"/>
</dbReference>
<dbReference type="SUPFAM" id="SSF55347">
    <property type="entry name" value="Glyceraldehyde-3-phosphate dehydrogenase-like, C-terminal domain"/>
    <property type="match status" value="1"/>
</dbReference>
<dbReference type="SUPFAM" id="SSF51735">
    <property type="entry name" value="NAD(P)-binding Rossmann-fold domains"/>
    <property type="match status" value="1"/>
</dbReference>
<name>DXR_NOSS1</name>
<organism>
    <name type="scientific">Nostoc sp. (strain PCC 7120 / SAG 25.82 / UTEX 2576)</name>
    <dbReference type="NCBI Taxonomy" id="103690"/>
    <lineage>
        <taxon>Bacteria</taxon>
        <taxon>Bacillati</taxon>
        <taxon>Cyanobacteriota</taxon>
        <taxon>Cyanophyceae</taxon>
        <taxon>Nostocales</taxon>
        <taxon>Nostocaceae</taxon>
        <taxon>Nostoc</taxon>
    </lineage>
</organism>
<accession>Q8YP49</accession>
<sequence length="399" mass="43201">MVKSITLVGSTGSIGTQTLDIVSQYPDQFRIVGLAAGSNVEMLAEQIRQFRPQIAAISAAEKLPALQAAIKDLDPQPILLGGEAGVIEVARYGDAETVVTGIVGCAGLLPTIAAIEAGKDIALANKETLIAGGPVVLPLVEKHGVKLLPADSEHSAIFQCLQGVPKGGLKKILLTASGGAFRDWDVERLAEVTVSDALKHPNWSMGRKITVDSATLMNKGLEVIEAHFLFGLDYQDIEIVIHPQSIIHSLIELQDTSVLAQLGWPDMRLPLLYALSWPERIYTDWERLNLVKAGNLTFREPDHQKYPCMQLAYAAGRAGGSMPAVLNAANEQVVALFLDEKIKFLDIPRCIELVCDRHQNDNCANPSLDDILAADQWARQEVLTATKNLASQPQIISVN</sequence>
<evidence type="ECO:0000255" key="1">
    <source>
        <dbReference type="HAMAP-Rule" id="MF_00183"/>
    </source>
</evidence>
<keyword id="KW-0414">Isoprene biosynthesis</keyword>
<keyword id="KW-0464">Manganese</keyword>
<keyword id="KW-0479">Metal-binding</keyword>
<keyword id="KW-0521">NADP</keyword>
<keyword id="KW-0560">Oxidoreductase</keyword>
<keyword id="KW-1185">Reference proteome</keyword>
<gene>
    <name evidence="1" type="primary">dxr</name>
    <name type="ordered locus">alr4351</name>
</gene>
<protein>
    <recommendedName>
        <fullName evidence="1">1-deoxy-D-xylulose 5-phosphate reductoisomerase</fullName>
        <shortName evidence="1">DXP reductoisomerase</shortName>
        <ecNumber evidence="1">1.1.1.267</ecNumber>
    </recommendedName>
    <alternativeName>
        <fullName evidence="1">1-deoxyxylulose-5-phosphate reductoisomerase</fullName>
    </alternativeName>
    <alternativeName>
        <fullName evidence="1">2-C-methyl-D-erythritol 4-phosphate synthase</fullName>
    </alternativeName>
</protein>